<proteinExistence type="inferred from homology"/>
<protein>
    <recommendedName>
        <fullName evidence="1">Large ribosomal subunit protein uL22</fullName>
    </recommendedName>
    <alternativeName>
        <fullName evidence="2">50S ribosomal protein L22</fullName>
    </alternativeName>
</protein>
<comment type="function">
    <text evidence="1">This protein binds specifically to 23S rRNA; its binding is stimulated by other ribosomal proteins, e.g. L4, L17, and L20. It is important during the early stages of 50S assembly. It makes multiple contacts with different domains of the 23S rRNA in the assembled 50S subunit and ribosome (By similarity).</text>
</comment>
<comment type="function">
    <text evidence="1">The globular domain of the protein is located near the polypeptide exit tunnel on the outside of the subunit, while an extended beta-hairpin is found that lines the wall of the exit tunnel in the center of the 70S ribosome.</text>
</comment>
<comment type="subunit">
    <text evidence="1">Part of the 50S ribosomal subunit.</text>
</comment>
<comment type="similarity">
    <text evidence="1">Belongs to the universal ribosomal protein uL22 family.</text>
</comment>
<feature type="chain" id="PRO_0000243152" description="Large ribosomal subunit protein uL22">
    <location>
        <begin position="1"/>
        <end position="113"/>
    </location>
</feature>
<accession>Q5L418</accession>
<evidence type="ECO:0000255" key="1">
    <source>
        <dbReference type="HAMAP-Rule" id="MF_01331"/>
    </source>
</evidence>
<evidence type="ECO:0000305" key="2"/>
<keyword id="KW-1185">Reference proteome</keyword>
<keyword id="KW-0687">Ribonucleoprotein</keyword>
<keyword id="KW-0689">Ribosomal protein</keyword>
<keyword id="KW-0694">RNA-binding</keyword>
<keyword id="KW-0699">rRNA-binding</keyword>
<reference key="1">
    <citation type="journal article" date="2004" name="Nucleic Acids Res.">
        <title>Thermoadaptation trait revealed by the genome sequence of thermophilic Geobacillus kaustophilus.</title>
        <authorList>
            <person name="Takami H."/>
            <person name="Takaki Y."/>
            <person name="Chee G.-J."/>
            <person name="Nishi S."/>
            <person name="Shimamura S."/>
            <person name="Suzuki H."/>
            <person name="Matsui S."/>
            <person name="Uchiyama I."/>
        </authorList>
    </citation>
    <scope>NUCLEOTIDE SEQUENCE [LARGE SCALE GENOMIC DNA]</scope>
    <source>
        <strain>HTA426</strain>
    </source>
</reference>
<dbReference type="EMBL" id="BA000043">
    <property type="protein sequence ID" value="BAD74396.1"/>
    <property type="molecule type" value="Genomic_DNA"/>
</dbReference>
<dbReference type="RefSeq" id="WP_011229625.1">
    <property type="nucleotide sequence ID" value="NC_006510.1"/>
</dbReference>
<dbReference type="SMR" id="Q5L418"/>
<dbReference type="STRING" id="235909.GK0111"/>
<dbReference type="GeneID" id="32062099"/>
<dbReference type="KEGG" id="gka:GK0111"/>
<dbReference type="eggNOG" id="COG0091">
    <property type="taxonomic scope" value="Bacteria"/>
</dbReference>
<dbReference type="HOGENOM" id="CLU_083987_3_3_9"/>
<dbReference type="Proteomes" id="UP000001172">
    <property type="component" value="Chromosome"/>
</dbReference>
<dbReference type="GO" id="GO:0022625">
    <property type="term" value="C:cytosolic large ribosomal subunit"/>
    <property type="evidence" value="ECO:0007669"/>
    <property type="project" value="TreeGrafter"/>
</dbReference>
<dbReference type="GO" id="GO:0019843">
    <property type="term" value="F:rRNA binding"/>
    <property type="evidence" value="ECO:0007669"/>
    <property type="project" value="UniProtKB-UniRule"/>
</dbReference>
<dbReference type="GO" id="GO:0003735">
    <property type="term" value="F:structural constituent of ribosome"/>
    <property type="evidence" value="ECO:0007669"/>
    <property type="project" value="InterPro"/>
</dbReference>
<dbReference type="GO" id="GO:0006412">
    <property type="term" value="P:translation"/>
    <property type="evidence" value="ECO:0007669"/>
    <property type="project" value="UniProtKB-UniRule"/>
</dbReference>
<dbReference type="CDD" id="cd00336">
    <property type="entry name" value="Ribosomal_L22"/>
    <property type="match status" value="1"/>
</dbReference>
<dbReference type="FunFam" id="3.90.470.10:FF:000001">
    <property type="entry name" value="50S ribosomal protein L22"/>
    <property type="match status" value="1"/>
</dbReference>
<dbReference type="Gene3D" id="3.90.470.10">
    <property type="entry name" value="Ribosomal protein L22/L17"/>
    <property type="match status" value="1"/>
</dbReference>
<dbReference type="HAMAP" id="MF_01331_B">
    <property type="entry name" value="Ribosomal_uL22_B"/>
    <property type="match status" value="1"/>
</dbReference>
<dbReference type="InterPro" id="IPR001063">
    <property type="entry name" value="Ribosomal_uL22"/>
</dbReference>
<dbReference type="InterPro" id="IPR005727">
    <property type="entry name" value="Ribosomal_uL22_bac/chlpt-type"/>
</dbReference>
<dbReference type="InterPro" id="IPR047867">
    <property type="entry name" value="Ribosomal_uL22_bac/org-type"/>
</dbReference>
<dbReference type="InterPro" id="IPR018260">
    <property type="entry name" value="Ribosomal_uL22_CS"/>
</dbReference>
<dbReference type="InterPro" id="IPR036394">
    <property type="entry name" value="Ribosomal_uL22_sf"/>
</dbReference>
<dbReference type="NCBIfam" id="TIGR01044">
    <property type="entry name" value="rplV_bact"/>
    <property type="match status" value="1"/>
</dbReference>
<dbReference type="PANTHER" id="PTHR13501">
    <property type="entry name" value="CHLOROPLAST 50S RIBOSOMAL PROTEIN L22-RELATED"/>
    <property type="match status" value="1"/>
</dbReference>
<dbReference type="PANTHER" id="PTHR13501:SF8">
    <property type="entry name" value="LARGE RIBOSOMAL SUBUNIT PROTEIN UL22M"/>
    <property type="match status" value="1"/>
</dbReference>
<dbReference type="Pfam" id="PF00237">
    <property type="entry name" value="Ribosomal_L22"/>
    <property type="match status" value="1"/>
</dbReference>
<dbReference type="SUPFAM" id="SSF54843">
    <property type="entry name" value="Ribosomal protein L22"/>
    <property type="match status" value="1"/>
</dbReference>
<dbReference type="PROSITE" id="PS00464">
    <property type="entry name" value="RIBOSOMAL_L22"/>
    <property type="match status" value="1"/>
</dbReference>
<gene>
    <name evidence="1" type="primary">rplV</name>
    <name type="ordered locus">GK0111</name>
</gene>
<sequence length="113" mass="12486">MQAKAVARTVRIAPRKARLVIDLIRGKEVGEAFAILRHTPKAASPIIEKVLKSAVANAEHNYDMDVNNLVITQAYVDEGPTLKRFRPRAMGRASAINKRTSHITIVVSEKKEG</sequence>
<name>RL22_GEOKA</name>
<organism>
    <name type="scientific">Geobacillus kaustophilus (strain HTA426)</name>
    <dbReference type="NCBI Taxonomy" id="235909"/>
    <lineage>
        <taxon>Bacteria</taxon>
        <taxon>Bacillati</taxon>
        <taxon>Bacillota</taxon>
        <taxon>Bacilli</taxon>
        <taxon>Bacillales</taxon>
        <taxon>Anoxybacillaceae</taxon>
        <taxon>Geobacillus</taxon>
        <taxon>Geobacillus thermoleovorans group</taxon>
    </lineage>
</organism>